<reference key="1">
    <citation type="journal article" date="2007" name="Proc. Natl. Acad. Sci. U.S.A.">
        <title>Genome plasticity of BCG and impact on vaccine efficacy.</title>
        <authorList>
            <person name="Brosch R."/>
            <person name="Gordon S.V."/>
            <person name="Garnier T."/>
            <person name="Eiglmeier K."/>
            <person name="Frigui W."/>
            <person name="Valenti P."/>
            <person name="Dos Santos S."/>
            <person name="Duthoy S."/>
            <person name="Lacroix C."/>
            <person name="Garcia-Pelayo C."/>
            <person name="Inwald J.K."/>
            <person name="Golby P."/>
            <person name="Garcia J.N."/>
            <person name="Hewinson R.G."/>
            <person name="Behr M.A."/>
            <person name="Quail M.A."/>
            <person name="Churcher C."/>
            <person name="Barrell B.G."/>
            <person name="Parkhill J."/>
            <person name="Cole S.T."/>
        </authorList>
    </citation>
    <scope>NUCLEOTIDE SEQUENCE [LARGE SCALE GENOMIC DNA]</scope>
    <source>
        <strain>BCG / Pasteur 1173P2</strain>
    </source>
</reference>
<comment type="function">
    <text evidence="1">Catalyzes the attachment of alanine to tRNA(Ala) in a two-step reaction: alanine is first activated by ATP to form Ala-AMP and then transferred to the acceptor end of tRNA(Ala). Also edits incorrectly charged Ser-tRNA(Ala) and Gly-tRNA(Ala) via its editing domain.</text>
</comment>
<comment type="catalytic activity">
    <reaction evidence="1">
        <text>tRNA(Ala) + L-alanine + ATP = L-alanyl-tRNA(Ala) + AMP + diphosphate</text>
        <dbReference type="Rhea" id="RHEA:12540"/>
        <dbReference type="Rhea" id="RHEA-COMP:9657"/>
        <dbReference type="Rhea" id="RHEA-COMP:9923"/>
        <dbReference type="ChEBI" id="CHEBI:30616"/>
        <dbReference type="ChEBI" id="CHEBI:33019"/>
        <dbReference type="ChEBI" id="CHEBI:57972"/>
        <dbReference type="ChEBI" id="CHEBI:78442"/>
        <dbReference type="ChEBI" id="CHEBI:78497"/>
        <dbReference type="ChEBI" id="CHEBI:456215"/>
        <dbReference type="EC" id="6.1.1.7"/>
    </reaction>
</comment>
<comment type="cofactor">
    <cofactor evidence="1">
        <name>Zn(2+)</name>
        <dbReference type="ChEBI" id="CHEBI:29105"/>
    </cofactor>
    <text evidence="1">Binds 1 zinc ion per subunit.</text>
</comment>
<comment type="subcellular location">
    <subcellularLocation>
        <location evidence="1">Cytoplasm</location>
    </subcellularLocation>
</comment>
<comment type="domain">
    <text evidence="1">Consists of three domains; the N-terminal catalytic domain, the editing domain and the C-terminal C-Ala domain. The editing domain removes incorrectly charged amino acids, while the C-Ala domain, along with tRNA(Ala), serves as a bridge to cooperatively bring together the editing and aminoacylation centers thus stimulating deacylation of misacylated tRNAs.</text>
</comment>
<comment type="similarity">
    <text evidence="1">Belongs to the class-II aminoacyl-tRNA synthetase family.</text>
</comment>
<accession>A1KLQ3</accession>
<keyword id="KW-0030">Aminoacyl-tRNA synthetase</keyword>
<keyword id="KW-0067">ATP-binding</keyword>
<keyword id="KW-0963">Cytoplasm</keyword>
<keyword id="KW-0436">Ligase</keyword>
<keyword id="KW-0479">Metal-binding</keyword>
<keyword id="KW-0547">Nucleotide-binding</keyword>
<keyword id="KW-0648">Protein biosynthesis</keyword>
<keyword id="KW-0694">RNA-binding</keyword>
<keyword id="KW-0820">tRNA-binding</keyword>
<keyword id="KW-0862">Zinc</keyword>
<name>SYA_MYCBP</name>
<sequence length="904" mass="97343">MQTHEIRKRFLDHFVKAGHTEVPSASVILDDPNLLFVNAGMVQFVPFFLGQRTPPYPTATSIQKCIRTPDIDEVGITTRHNTFFQMAGNFSFGDYFKRGAIELAWALLTNSLAAGGYGLDPERIWTTVYFDDDEAVRLWQEVAGLPAERIQRRGMADNYWSMGIPGPCGPSSEIYYDRGPEFGPAGGPIVSEDRYLEVWNLVFMQNERGEGTTKEDYQILGPLPRNNIDTGMGVERIALVLQDVHNVYETDLLRPVIDTVARVAARAYDVGNHEDDVRYRIIADHSRTAAILIGDGVSPGNDGRGYVLRRLLRRVIRSAKLLGIDAAIVGDLMATVRNAMGPSYPELVADFERISRIAVAEETAFNRTLASGSRLFEEVASSTKKSGATVLSGSDAFTLHDTYGFPIELTLEMAAETGLQVDEIGFRELMAEQRRRAKADAAARKHAHADLSAYRELVDAGATEFTGFDELRSQARILGIFVDGKRVPVVAHGVAGGAGEGQRVELVLDRTPLYAESGGQIADEGTISGTGSSEAARAAVTDVQKIAKTLWVHRVNVESGEFVEGDTVIAAVDPGWRRGATQGHSGTHMVHAALRQVLGPNAVQAGSLNRPGYLRFDFNWQGPLTDDQRTQVEEVTNEAVQADFEVRTFTEQLDKAKAMGAIALFGESYPDEVRVVEMGGPFSLELCGGTHVSNTAQIGPVTILGESSIGSGVRRVEAYVGLDSFRHLAKERALMAGLASSLKVPSEEVPARVANLVERLRAAEKELERVRMASARAAATNAAAGAQRIGNVRLVAQRMSGGMTAADLRSLIGDIRGKLGSEPAVVALIAEGESQTVPYAVAANPAAQDLGIRANDLVKQLAVAVEGRGGGKADLAQGSGKNPTGIDAALDAVRSEIAVIARVG</sequence>
<gene>
    <name evidence="1" type="primary">alaS</name>
    <name type="ordered locus">BCG_2578c</name>
</gene>
<protein>
    <recommendedName>
        <fullName evidence="1">Alanine--tRNA ligase</fullName>
        <ecNumber evidence="1">6.1.1.7</ecNumber>
    </recommendedName>
    <alternativeName>
        <fullName evidence="1">Alanyl-tRNA synthetase</fullName>
        <shortName evidence="1">AlaRS</shortName>
    </alternativeName>
</protein>
<proteinExistence type="inferred from homology"/>
<feature type="chain" id="PRO_0000347680" description="Alanine--tRNA ligase">
    <location>
        <begin position="1"/>
        <end position="904"/>
    </location>
</feature>
<feature type="binding site" evidence="1">
    <location>
        <position position="584"/>
    </location>
    <ligand>
        <name>Zn(2+)</name>
        <dbReference type="ChEBI" id="CHEBI:29105"/>
    </ligand>
</feature>
<feature type="binding site" evidence="1">
    <location>
        <position position="588"/>
    </location>
    <ligand>
        <name>Zn(2+)</name>
        <dbReference type="ChEBI" id="CHEBI:29105"/>
    </ligand>
</feature>
<feature type="binding site" evidence="1">
    <location>
        <position position="687"/>
    </location>
    <ligand>
        <name>Zn(2+)</name>
        <dbReference type="ChEBI" id="CHEBI:29105"/>
    </ligand>
</feature>
<feature type="binding site" evidence="1">
    <location>
        <position position="691"/>
    </location>
    <ligand>
        <name>Zn(2+)</name>
        <dbReference type="ChEBI" id="CHEBI:29105"/>
    </ligand>
</feature>
<dbReference type="EC" id="6.1.1.7" evidence="1"/>
<dbReference type="EMBL" id="AM408590">
    <property type="protein sequence ID" value="CAL72566.1"/>
    <property type="molecule type" value="Genomic_DNA"/>
</dbReference>
<dbReference type="RefSeq" id="WP_003413201.1">
    <property type="nucleotide sequence ID" value="NC_008769.1"/>
</dbReference>
<dbReference type="SMR" id="A1KLQ3"/>
<dbReference type="KEGG" id="mbb:BCG_2578c"/>
<dbReference type="HOGENOM" id="CLU_004485_1_1_11"/>
<dbReference type="Proteomes" id="UP000001472">
    <property type="component" value="Chromosome"/>
</dbReference>
<dbReference type="GO" id="GO:0005829">
    <property type="term" value="C:cytosol"/>
    <property type="evidence" value="ECO:0007669"/>
    <property type="project" value="TreeGrafter"/>
</dbReference>
<dbReference type="GO" id="GO:0004813">
    <property type="term" value="F:alanine-tRNA ligase activity"/>
    <property type="evidence" value="ECO:0007669"/>
    <property type="project" value="UniProtKB-UniRule"/>
</dbReference>
<dbReference type="GO" id="GO:0002161">
    <property type="term" value="F:aminoacyl-tRNA deacylase activity"/>
    <property type="evidence" value="ECO:0007669"/>
    <property type="project" value="TreeGrafter"/>
</dbReference>
<dbReference type="GO" id="GO:0005524">
    <property type="term" value="F:ATP binding"/>
    <property type="evidence" value="ECO:0007669"/>
    <property type="project" value="UniProtKB-UniRule"/>
</dbReference>
<dbReference type="GO" id="GO:0000049">
    <property type="term" value="F:tRNA binding"/>
    <property type="evidence" value="ECO:0007669"/>
    <property type="project" value="UniProtKB-KW"/>
</dbReference>
<dbReference type="GO" id="GO:0008270">
    <property type="term" value="F:zinc ion binding"/>
    <property type="evidence" value="ECO:0007669"/>
    <property type="project" value="UniProtKB-UniRule"/>
</dbReference>
<dbReference type="GO" id="GO:0006419">
    <property type="term" value="P:alanyl-tRNA aminoacylation"/>
    <property type="evidence" value="ECO:0007669"/>
    <property type="project" value="UniProtKB-UniRule"/>
</dbReference>
<dbReference type="CDD" id="cd00673">
    <property type="entry name" value="AlaRS_core"/>
    <property type="match status" value="1"/>
</dbReference>
<dbReference type="FunFam" id="2.40.30.130:FF:000011">
    <property type="entry name" value="Alanine--tRNA ligase"/>
    <property type="match status" value="1"/>
</dbReference>
<dbReference type="FunFam" id="3.10.310.40:FF:000001">
    <property type="entry name" value="Alanine--tRNA ligase"/>
    <property type="match status" value="1"/>
</dbReference>
<dbReference type="FunFam" id="3.30.54.20:FF:000001">
    <property type="entry name" value="Alanine--tRNA ligase"/>
    <property type="match status" value="1"/>
</dbReference>
<dbReference type="FunFam" id="3.30.930.10:FF:000004">
    <property type="entry name" value="Alanine--tRNA ligase"/>
    <property type="match status" value="1"/>
</dbReference>
<dbReference type="FunFam" id="3.30.980.10:FF:000004">
    <property type="entry name" value="Alanine--tRNA ligase, cytoplasmic"/>
    <property type="match status" value="1"/>
</dbReference>
<dbReference type="Gene3D" id="2.40.30.130">
    <property type="match status" value="1"/>
</dbReference>
<dbReference type="Gene3D" id="3.10.310.40">
    <property type="match status" value="1"/>
</dbReference>
<dbReference type="Gene3D" id="3.30.54.20">
    <property type="match status" value="1"/>
</dbReference>
<dbReference type="Gene3D" id="6.10.250.550">
    <property type="match status" value="1"/>
</dbReference>
<dbReference type="Gene3D" id="3.30.930.10">
    <property type="entry name" value="Bira Bifunctional Protein, Domain 2"/>
    <property type="match status" value="1"/>
</dbReference>
<dbReference type="Gene3D" id="3.30.980.10">
    <property type="entry name" value="Threonyl-trna Synthetase, Chain A, domain 2"/>
    <property type="match status" value="1"/>
</dbReference>
<dbReference type="HAMAP" id="MF_00036_B">
    <property type="entry name" value="Ala_tRNA_synth_B"/>
    <property type="match status" value="1"/>
</dbReference>
<dbReference type="InterPro" id="IPR045864">
    <property type="entry name" value="aa-tRNA-synth_II/BPL/LPL"/>
</dbReference>
<dbReference type="InterPro" id="IPR002318">
    <property type="entry name" value="Ala-tRNA-lgiase_IIc"/>
</dbReference>
<dbReference type="InterPro" id="IPR018162">
    <property type="entry name" value="Ala-tRNA-ligase_IIc_anticod-bd"/>
</dbReference>
<dbReference type="InterPro" id="IPR018165">
    <property type="entry name" value="Ala-tRNA-synth_IIc_core"/>
</dbReference>
<dbReference type="InterPro" id="IPR018164">
    <property type="entry name" value="Ala-tRNA-synth_IIc_N"/>
</dbReference>
<dbReference type="InterPro" id="IPR050058">
    <property type="entry name" value="Ala-tRNA_ligase"/>
</dbReference>
<dbReference type="InterPro" id="IPR023033">
    <property type="entry name" value="Ala_tRNA_ligase_euk/bac"/>
</dbReference>
<dbReference type="InterPro" id="IPR003156">
    <property type="entry name" value="DHHA1_dom"/>
</dbReference>
<dbReference type="InterPro" id="IPR018163">
    <property type="entry name" value="Thr/Ala-tRNA-synth_IIc_edit"/>
</dbReference>
<dbReference type="InterPro" id="IPR009000">
    <property type="entry name" value="Transl_B-barrel_sf"/>
</dbReference>
<dbReference type="InterPro" id="IPR012947">
    <property type="entry name" value="tRNA_SAD"/>
</dbReference>
<dbReference type="NCBIfam" id="TIGR00344">
    <property type="entry name" value="alaS"/>
    <property type="match status" value="1"/>
</dbReference>
<dbReference type="PANTHER" id="PTHR11777:SF9">
    <property type="entry name" value="ALANINE--TRNA LIGASE, CYTOPLASMIC"/>
    <property type="match status" value="1"/>
</dbReference>
<dbReference type="PANTHER" id="PTHR11777">
    <property type="entry name" value="ALANYL-TRNA SYNTHETASE"/>
    <property type="match status" value="1"/>
</dbReference>
<dbReference type="Pfam" id="PF02272">
    <property type="entry name" value="DHHA1"/>
    <property type="match status" value="1"/>
</dbReference>
<dbReference type="Pfam" id="PF01411">
    <property type="entry name" value="tRNA-synt_2c"/>
    <property type="match status" value="1"/>
</dbReference>
<dbReference type="Pfam" id="PF07973">
    <property type="entry name" value="tRNA_SAD"/>
    <property type="match status" value="1"/>
</dbReference>
<dbReference type="PRINTS" id="PR00980">
    <property type="entry name" value="TRNASYNTHALA"/>
</dbReference>
<dbReference type="SMART" id="SM00863">
    <property type="entry name" value="tRNA_SAD"/>
    <property type="match status" value="1"/>
</dbReference>
<dbReference type="SUPFAM" id="SSF55681">
    <property type="entry name" value="Class II aaRS and biotin synthetases"/>
    <property type="match status" value="1"/>
</dbReference>
<dbReference type="SUPFAM" id="SSF101353">
    <property type="entry name" value="Putative anticodon-binding domain of alanyl-tRNA synthetase (AlaRS)"/>
    <property type="match status" value="1"/>
</dbReference>
<dbReference type="SUPFAM" id="SSF55186">
    <property type="entry name" value="ThrRS/AlaRS common domain"/>
    <property type="match status" value="1"/>
</dbReference>
<dbReference type="SUPFAM" id="SSF50447">
    <property type="entry name" value="Translation proteins"/>
    <property type="match status" value="1"/>
</dbReference>
<dbReference type="PROSITE" id="PS50860">
    <property type="entry name" value="AA_TRNA_LIGASE_II_ALA"/>
    <property type="match status" value="1"/>
</dbReference>
<organism>
    <name type="scientific">Mycobacterium bovis (strain BCG / Pasteur 1173P2)</name>
    <dbReference type="NCBI Taxonomy" id="410289"/>
    <lineage>
        <taxon>Bacteria</taxon>
        <taxon>Bacillati</taxon>
        <taxon>Actinomycetota</taxon>
        <taxon>Actinomycetes</taxon>
        <taxon>Mycobacteriales</taxon>
        <taxon>Mycobacteriaceae</taxon>
        <taxon>Mycobacterium</taxon>
        <taxon>Mycobacterium tuberculosis complex</taxon>
    </lineage>
</organism>
<evidence type="ECO:0000255" key="1">
    <source>
        <dbReference type="HAMAP-Rule" id="MF_00036"/>
    </source>
</evidence>